<feature type="initiator methionine" description="Removed" evidence="7 8">
    <location>
        <position position="1"/>
    </location>
</feature>
<feature type="chain" id="PRO_0000071852" description="Histone H2B">
    <location>
        <begin position="2"/>
        <end position="124"/>
    </location>
</feature>
<feature type="region of interest" description="Disordered" evidence="6">
    <location>
        <begin position="1"/>
        <end position="33"/>
    </location>
</feature>
<feature type="compositionally biased region" description="Basic residues" evidence="6">
    <location>
        <begin position="8"/>
        <end position="17"/>
    </location>
</feature>
<feature type="modified residue" description="N6-acetyllysine" evidence="5">
    <location>
        <position position="6"/>
    </location>
</feature>
<feature type="modified residue" description="N6-acetyllysine" evidence="5">
    <location>
        <position position="11"/>
    </location>
</feature>
<feature type="modified residue" description="Phosphoserine" evidence="1">
    <location>
        <position position="13"/>
    </location>
</feature>
<feature type="modified residue" description="N6-acetyllysine" evidence="5">
    <location>
        <position position="14"/>
    </location>
</feature>
<feature type="modified residue" description="N6-acetyllysine" evidence="5">
    <location>
        <position position="19"/>
    </location>
</feature>
<feature type="glycosylation site" description="O-linked (GlcNAc) serine" evidence="4">
    <location>
        <position position="111"/>
    </location>
</feature>
<feature type="cross-link" description="Glycyl lysine isopeptide (Lys-Gly) (interchain with G-Cter in ubiquitin)" evidence="2">
    <location>
        <position position="119"/>
    </location>
</feature>
<organism>
    <name type="scientific">Salmo trutta</name>
    <name type="common">Brown trout</name>
    <dbReference type="NCBI Taxonomy" id="8032"/>
    <lineage>
        <taxon>Eukaryota</taxon>
        <taxon>Metazoa</taxon>
        <taxon>Chordata</taxon>
        <taxon>Craniata</taxon>
        <taxon>Vertebrata</taxon>
        <taxon>Euteleostomi</taxon>
        <taxon>Actinopterygii</taxon>
        <taxon>Neopterygii</taxon>
        <taxon>Teleostei</taxon>
        <taxon>Protacanthopterygii</taxon>
        <taxon>Salmoniformes</taxon>
        <taxon>Salmonidae</taxon>
        <taxon>Salmoninae</taxon>
        <taxon>Salmo</taxon>
    </lineage>
</organism>
<reference key="1">
    <citation type="journal article" date="1978" name="Biochemistry">
        <title>Primary structure of histone H2B from trout (Salmo trutta) testes.</title>
        <authorList>
            <person name="Kootstra A."/>
            <person name="Bailey G.S."/>
        </authorList>
    </citation>
    <scope>PROTEIN SEQUENCE OF 2-124</scope>
    <source>
        <tissue>Testis</tissue>
    </source>
</reference>
<reference key="2">
    <citation type="journal article" date="1976" name="FEBS Lett.">
        <title>The primary structure of histone H2B from brown trout (Salmo trutta) testes.</title>
        <authorList>
            <person name="Kootstra A."/>
            <person name="Bailey G.S."/>
        </authorList>
    </citation>
    <scope>PROTEIN SEQUENCE OF 2-124</scope>
    <source>
        <tissue>Testis</tissue>
    </source>
</reference>
<accession>P69070</accession>
<accession>P02282</accession>
<keyword id="KW-0007">Acetylation</keyword>
<keyword id="KW-0158">Chromosome</keyword>
<keyword id="KW-0903">Direct protein sequencing</keyword>
<keyword id="KW-0238">DNA-binding</keyword>
<keyword id="KW-0325">Glycoprotein</keyword>
<keyword id="KW-1017">Isopeptide bond</keyword>
<keyword id="KW-0544">Nucleosome core</keyword>
<keyword id="KW-0539">Nucleus</keyword>
<keyword id="KW-0597">Phosphoprotein</keyword>
<keyword id="KW-1185">Reference proteome</keyword>
<keyword id="KW-0832">Ubl conjugation</keyword>
<proteinExistence type="evidence at protein level"/>
<name>H2B_SALTR</name>
<evidence type="ECO:0000250" key="1">
    <source>
        <dbReference type="UniProtKB" id="P06900"/>
    </source>
</evidence>
<evidence type="ECO:0000250" key="2">
    <source>
        <dbReference type="UniProtKB" id="P0C1H4"/>
    </source>
</evidence>
<evidence type="ECO:0000250" key="3">
    <source>
        <dbReference type="UniProtKB" id="P33778"/>
    </source>
</evidence>
<evidence type="ECO:0000250" key="4">
    <source>
        <dbReference type="UniProtKB" id="P62807"/>
    </source>
</evidence>
<evidence type="ECO:0000250" key="5">
    <source>
        <dbReference type="UniProtKB" id="P69069"/>
    </source>
</evidence>
<evidence type="ECO:0000256" key="6">
    <source>
        <dbReference type="SAM" id="MobiDB-lite"/>
    </source>
</evidence>
<evidence type="ECO:0000269" key="7">
    <source>
    </source>
</evidence>
<evidence type="ECO:0000269" key="8">
    <source>
    </source>
</evidence>
<evidence type="ECO:0000305" key="9"/>
<comment type="function">
    <text>Core component of nucleosome. Nucleosomes wrap and compact DNA into chromatin, limiting DNA accessibility to the cellular machineries which require DNA as a template. Histones thereby play a central role in transcription regulation, DNA repair, DNA replication and chromosomal stability. DNA accessibility is regulated via a complex set of post-translational modifications of histones, also called histone code, and nucleosome remodeling.</text>
</comment>
<comment type="subunit">
    <text>The nucleosome is a histone octamer containing two molecules each of H2A, H2B, H3 and H4 assembled in one H3-H4 heterotetramer and two H2A-H2B heterodimers. The octamer wraps approximately 147 bp of DNA.</text>
</comment>
<comment type="subcellular location">
    <subcellularLocation>
        <location>Nucleus</location>
    </subcellularLocation>
    <subcellularLocation>
        <location>Chromosome</location>
    </subcellularLocation>
</comment>
<comment type="PTM">
    <text evidence="3">Monoubiquitination of Lys-119 by BRE1 gives a specific tag for epigenetic transcriptional activation and is also prerequisite for histone H3 'Lys-4' and 'Lys-79' methylation.</text>
</comment>
<comment type="PTM">
    <text evidence="1">Phosphorylated during apoptosis; which facilitates apoptotic chromatin condensation.</text>
</comment>
<comment type="PTM">
    <text evidence="4">GlcNAcylation at Ser-111 promotes monoubiquitination of Lys-119 It fluctuates in response to extracellular glucose, and associates with transcribed genes.</text>
</comment>
<comment type="similarity">
    <text evidence="9">Belongs to the histone H2B family.</text>
</comment>
<sequence>MPEPAKSAPKKGSKKAVTKTAGKGGKKRKRSRKESYAIYVYKVLKQVHPDTGISSKAMGIMNSFVNDIFERIAGESSRLAHYNKRSTITSREIQTAVRLLLPGELAKHAVSEGTKAVTKYTSSK</sequence>
<dbReference type="PIR" id="A02609">
    <property type="entry name" value="HSSB22"/>
</dbReference>
<dbReference type="SMR" id="P69070"/>
<dbReference type="FunCoup" id="P69070">
    <property type="interactions" value="1165"/>
</dbReference>
<dbReference type="InParanoid" id="P69070"/>
<dbReference type="Proteomes" id="UP000472277">
    <property type="component" value="Unplaced"/>
</dbReference>
<dbReference type="GO" id="GO:0000786">
    <property type="term" value="C:nucleosome"/>
    <property type="evidence" value="ECO:0007669"/>
    <property type="project" value="UniProtKB-KW"/>
</dbReference>
<dbReference type="GO" id="GO:0005634">
    <property type="term" value="C:nucleus"/>
    <property type="evidence" value="ECO:0007669"/>
    <property type="project" value="UniProtKB-SubCell"/>
</dbReference>
<dbReference type="GO" id="GO:0003677">
    <property type="term" value="F:DNA binding"/>
    <property type="evidence" value="ECO:0007669"/>
    <property type="project" value="UniProtKB-KW"/>
</dbReference>
<dbReference type="GO" id="GO:0046982">
    <property type="term" value="F:protein heterodimerization activity"/>
    <property type="evidence" value="ECO:0007669"/>
    <property type="project" value="InterPro"/>
</dbReference>
<dbReference type="GO" id="GO:0030527">
    <property type="term" value="F:structural constituent of chromatin"/>
    <property type="evidence" value="ECO:0007669"/>
    <property type="project" value="InterPro"/>
</dbReference>
<dbReference type="CDD" id="cd22910">
    <property type="entry name" value="HFD_H2B"/>
    <property type="match status" value="1"/>
</dbReference>
<dbReference type="FunFam" id="1.10.20.10:FF:000003">
    <property type="entry name" value="Histone H2B"/>
    <property type="match status" value="1"/>
</dbReference>
<dbReference type="Gene3D" id="1.10.20.10">
    <property type="entry name" value="Histone, subunit A"/>
    <property type="match status" value="1"/>
</dbReference>
<dbReference type="InterPro" id="IPR009072">
    <property type="entry name" value="Histone-fold"/>
</dbReference>
<dbReference type="InterPro" id="IPR007125">
    <property type="entry name" value="Histone_H2A/H2B/H3"/>
</dbReference>
<dbReference type="InterPro" id="IPR000558">
    <property type="entry name" value="Histone_H2B"/>
</dbReference>
<dbReference type="InterPro" id="IPR055333">
    <property type="entry name" value="HISTONE_H2B_site"/>
</dbReference>
<dbReference type="PANTHER" id="PTHR23428">
    <property type="entry name" value="HISTONE H2B"/>
    <property type="match status" value="1"/>
</dbReference>
<dbReference type="Pfam" id="PF00125">
    <property type="entry name" value="Histone"/>
    <property type="match status" value="1"/>
</dbReference>
<dbReference type="PRINTS" id="PR00621">
    <property type="entry name" value="HISTONEH2B"/>
</dbReference>
<dbReference type="SMART" id="SM00427">
    <property type="entry name" value="H2B"/>
    <property type="match status" value="1"/>
</dbReference>
<dbReference type="SUPFAM" id="SSF47113">
    <property type="entry name" value="Histone-fold"/>
    <property type="match status" value="1"/>
</dbReference>
<dbReference type="PROSITE" id="PS00357">
    <property type="entry name" value="HISTONE_H2B"/>
    <property type="match status" value="1"/>
</dbReference>
<protein>
    <recommendedName>
        <fullName>Histone H2B</fullName>
    </recommendedName>
</protein>